<reference key="1">
    <citation type="journal article" date="2006" name="J. Bacteriol.">
        <title>The genome sequence of the obligately chemolithoautotrophic, facultatively anaerobic bacterium Thiobacillus denitrificans.</title>
        <authorList>
            <person name="Beller H.R."/>
            <person name="Chain P.S."/>
            <person name="Letain T.E."/>
            <person name="Chakicherla A."/>
            <person name="Larimer F.W."/>
            <person name="Richardson P.M."/>
            <person name="Coleman M.A."/>
            <person name="Wood A.P."/>
            <person name="Kelly D.P."/>
        </authorList>
    </citation>
    <scope>NUCLEOTIDE SEQUENCE [LARGE SCALE GENOMIC DNA]</scope>
    <source>
        <strain>ATCC 25259 / T1</strain>
    </source>
</reference>
<gene>
    <name evidence="1" type="primary">clpP</name>
    <name type="ordered locus">Tbd_1677</name>
</gene>
<sequence length="212" mass="23252">MLYDFERTAPEPQGLGLVPMVVEQSGRGERAYDIYSRLLKERVIFLVGPVNDATANLIVAQMLFLESENPDKDIYLYINSPGGSVSAGLAIYDTMQFIKPDVSTLCIGQAASMGAFLLTAGAKGKRYCLPNSRVMIHQPLGGFQGQASDIEIHAKEILYLKARLNGMLAKHTGQSLEVIDRDTDRDNFMSAEDSVKYGLVDKVLTSRNEAGN</sequence>
<keyword id="KW-0963">Cytoplasm</keyword>
<keyword id="KW-0378">Hydrolase</keyword>
<keyword id="KW-0645">Protease</keyword>
<keyword id="KW-1185">Reference proteome</keyword>
<keyword id="KW-0720">Serine protease</keyword>
<protein>
    <recommendedName>
        <fullName evidence="1">ATP-dependent Clp protease proteolytic subunit</fullName>
        <ecNumber evidence="1">3.4.21.92</ecNumber>
    </recommendedName>
    <alternativeName>
        <fullName evidence="1">Endopeptidase Clp</fullName>
    </alternativeName>
</protein>
<comment type="function">
    <text evidence="1">Cleaves peptides in various proteins in a process that requires ATP hydrolysis. Has a chymotrypsin-like activity. Plays a major role in the degradation of misfolded proteins.</text>
</comment>
<comment type="catalytic activity">
    <reaction evidence="1">
        <text>Hydrolysis of proteins to small peptides in the presence of ATP and magnesium. alpha-casein is the usual test substrate. In the absence of ATP, only oligopeptides shorter than five residues are hydrolyzed (such as succinyl-Leu-Tyr-|-NHMec, and Leu-Tyr-Leu-|-Tyr-Trp, in which cleavage of the -Tyr-|-Leu- and -Tyr-|-Trp bonds also occurs).</text>
        <dbReference type="EC" id="3.4.21.92"/>
    </reaction>
</comment>
<comment type="subunit">
    <text evidence="1">Fourteen ClpP subunits assemble into 2 heptameric rings which stack back to back to give a disk-like structure with a central cavity, resembling the structure of eukaryotic proteasomes.</text>
</comment>
<comment type="subcellular location">
    <subcellularLocation>
        <location evidence="1">Cytoplasm</location>
    </subcellularLocation>
</comment>
<comment type="similarity">
    <text evidence="1">Belongs to the peptidase S14 family.</text>
</comment>
<proteinExistence type="inferred from homology"/>
<accession>Q3SI98</accession>
<dbReference type="EC" id="3.4.21.92" evidence="1"/>
<dbReference type="EMBL" id="CP000116">
    <property type="protein sequence ID" value="AAZ97630.1"/>
    <property type="molecule type" value="Genomic_DNA"/>
</dbReference>
<dbReference type="RefSeq" id="WP_011312189.1">
    <property type="nucleotide sequence ID" value="NC_007404.1"/>
</dbReference>
<dbReference type="SMR" id="Q3SI98"/>
<dbReference type="STRING" id="292415.Tbd_1677"/>
<dbReference type="MEROPS" id="S14.001"/>
<dbReference type="KEGG" id="tbd:Tbd_1677"/>
<dbReference type="eggNOG" id="COG0740">
    <property type="taxonomic scope" value="Bacteria"/>
</dbReference>
<dbReference type="HOGENOM" id="CLU_058707_3_2_4"/>
<dbReference type="OrthoDB" id="9802800at2"/>
<dbReference type="Proteomes" id="UP000008291">
    <property type="component" value="Chromosome"/>
</dbReference>
<dbReference type="GO" id="GO:0005737">
    <property type="term" value="C:cytoplasm"/>
    <property type="evidence" value="ECO:0007669"/>
    <property type="project" value="UniProtKB-SubCell"/>
</dbReference>
<dbReference type="GO" id="GO:0009368">
    <property type="term" value="C:endopeptidase Clp complex"/>
    <property type="evidence" value="ECO:0007669"/>
    <property type="project" value="TreeGrafter"/>
</dbReference>
<dbReference type="GO" id="GO:0004176">
    <property type="term" value="F:ATP-dependent peptidase activity"/>
    <property type="evidence" value="ECO:0007669"/>
    <property type="project" value="InterPro"/>
</dbReference>
<dbReference type="GO" id="GO:0051117">
    <property type="term" value="F:ATPase binding"/>
    <property type="evidence" value="ECO:0007669"/>
    <property type="project" value="TreeGrafter"/>
</dbReference>
<dbReference type="GO" id="GO:0004252">
    <property type="term" value="F:serine-type endopeptidase activity"/>
    <property type="evidence" value="ECO:0007669"/>
    <property type="project" value="UniProtKB-UniRule"/>
</dbReference>
<dbReference type="GO" id="GO:0006515">
    <property type="term" value="P:protein quality control for misfolded or incompletely synthesized proteins"/>
    <property type="evidence" value="ECO:0007669"/>
    <property type="project" value="TreeGrafter"/>
</dbReference>
<dbReference type="CDD" id="cd07017">
    <property type="entry name" value="S14_ClpP_2"/>
    <property type="match status" value="1"/>
</dbReference>
<dbReference type="FunFam" id="3.90.226.10:FF:000001">
    <property type="entry name" value="ATP-dependent Clp protease proteolytic subunit"/>
    <property type="match status" value="1"/>
</dbReference>
<dbReference type="Gene3D" id="3.90.226.10">
    <property type="entry name" value="2-enoyl-CoA Hydratase, Chain A, domain 1"/>
    <property type="match status" value="1"/>
</dbReference>
<dbReference type="HAMAP" id="MF_00444">
    <property type="entry name" value="ClpP"/>
    <property type="match status" value="1"/>
</dbReference>
<dbReference type="InterPro" id="IPR001907">
    <property type="entry name" value="ClpP"/>
</dbReference>
<dbReference type="InterPro" id="IPR029045">
    <property type="entry name" value="ClpP/crotonase-like_dom_sf"/>
</dbReference>
<dbReference type="InterPro" id="IPR023562">
    <property type="entry name" value="ClpP/TepA"/>
</dbReference>
<dbReference type="InterPro" id="IPR033135">
    <property type="entry name" value="ClpP_His_AS"/>
</dbReference>
<dbReference type="InterPro" id="IPR018215">
    <property type="entry name" value="ClpP_Ser_AS"/>
</dbReference>
<dbReference type="NCBIfam" id="TIGR00493">
    <property type="entry name" value="clpP"/>
    <property type="match status" value="1"/>
</dbReference>
<dbReference type="NCBIfam" id="NF001368">
    <property type="entry name" value="PRK00277.1"/>
    <property type="match status" value="1"/>
</dbReference>
<dbReference type="NCBIfam" id="NF009205">
    <property type="entry name" value="PRK12553.1"/>
    <property type="match status" value="1"/>
</dbReference>
<dbReference type="PANTHER" id="PTHR10381">
    <property type="entry name" value="ATP-DEPENDENT CLP PROTEASE PROTEOLYTIC SUBUNIT"/>
    <property type="match status" value="1"/>
</dbReference>
<dbReference type="PANTHER" id="PTHR10381:SF70">
    <property type="entry name" value="ATP-DEPENDENT CLP PROTEASE PROTEOLYTIC SUBUNIT"/>
    <property type="match status" value="1"/>
</dbReference>
<dbReference type="Pfam" id="PF00574">
    <property type="entry name" value="CLP_protease"/>
    <property type="match status" value="1"/>
</dbReference>
<dbReference type="PRINTS" id="PR00127">
    <property type="entry name" value="CLPPROTEASEP"/>
</dbReference>
<dbReference type="SUPFAM" id="SSF52096">
    <property type="entry name" value="ClpP/crotonase"/>
    <property type="match status" value="1"/>
</dbReference>
<dbReference type="PROSITE" id="PS00382">
    <property type="entry name" value="CLP_PROTEASE_HIS"/>
    <property type="match status" value="1"/>
</dbReference>
<dbReference type="PROSITE" id="PS00381">
    <property type="entry name" value="CLP_PROTEASE_SER"/>
    <property type="match status" value="1"/>
</dbReference>
<organism>
    <name type="scientific">Thiobacillus denitrificans (strain ATCC 25259 / T1)</name>
    <dbReference type="NCBI Taxonomy" id="292415"/>
    <lineage>
        <taxon>Bacteria</taxon>
        <taxon>Pseudomonadati</taxon>
        <taxon>Pseudomonadota</taxon>
        <taxon>Betaproteobacteria</taxon>
        <taxon>Nitrosomonadales</taxon>
        <taxon>Thiobacillaceae</taxon>
        <taxon>Thiobacillus</taxon>
    </lineage>
</organism>
<name>CLPP_THIDA</name>
<feature type="chain" id="PRO_0000226477" description="ATP-dependent Clp protease proteolytic subunit">
    <location>
        <begin position="1"/>
        <end position="212"/>
    </location>
</feature>
<feature type="active site" description="Nucleophile" evidence="1">
    <location>
        <position position="112"/>
    </location>
</feature>
<feature type="active site" evidence="1">
    <location>
        <position position="137"/>
    </location>
</feature>
<evidence type="ECO:0000255" key="1">
    <source>
        <dbReference type="HAMAP-Rule" id="MF_00444"/>
    </source>
</evidence>